<comment type="function">
    <text evidence="1">Specifically methylates position 8 of adenine 2503 in 23S rRNA. Confers resistance to some classes of antibiotics.</text>
</comment>
<comment type="catalytic activity">
    <reaction evidence="1">
        <text>adenosine(2503) in 23S rRNA + 2 reduced [2Fe-2S]-[ferredoxin] + 2 S-adenosyl-L-methionine = 8-methyladenosine(2503) in 23S rRNA + 5'-deoxyadenosine + L-methionine + 2 oxidized [2Fe-2S]-[ferredoxin] + S-adenosyl-L-homocysteine</text>
        <dbReference type="Rhea" id="RHEA:42632"/>
        <dbReference type="Rhea" id="RHEA-COMP:10000"/>
        <dbReference type="Rhea" id="RHEA-COMP:10001"/>
        <dbReference type="Rhea" id="RHEA-COMP:10152"/>
        <dbReference type="Rhea" id="RHEA-COMP:10153"/>
        <dbReference type="ChEBI" id="CHEBI:17319"/>
        <dbReference type="ChEBI" id="CHEBI:33737"/>
        <dbReference type="ChEBI" id="CHEBI:33738"/>
        <dbReference type="ChEBI" id="CHEBI:57844"/>
        <dbReference type="ChEBI" id="CHEBI:57856"/>
        <dbReference type="ChEBI" id="CHEBI:59789"/>
        <dbReference type="ChEBI" id="CHEBI:74411"/>
        <dbReference type="ChEBI" id="CHEBI:74543"/>
        <dbReference type="EC" id="2.1.1.224"/>
    </reaction>
</comment>
<comment type="cofactor">
    <cofactor evidence="1">
        <name>[4Fe-4S] cluster</name>
        <dbReference type="ChEBI" id="CHEBI:49883"/>
    </cofactor>
    <text evidence="1">Binds 1 [4Fe-4S] cluster. The cluster is coordinated with 3 cysteines and an exchangeable S-adenosyl-L-methionine.</text>
</comment>
<comment type="subcellular location">
    <subcellularLocation>
        <location evidence="1">Cytoplasm</location>
    </subcellularLocation>
</comment>
<comment type="miscellaneous">
    <text evidence="1">Reaction proceeds by a ping-pong mechanism involving intermediate methylation of a conserved cysteine residue.</text>
</comment>
<comment type="similarity">
    <text evidence="1">Belongs to the radical SAM superfamily. RlmN family. Cfr subfamily.</text>
</comment>
<geneLocation type="plasmid">
    <name>pSCFS6</name>
</geneLocation>
<organism>
    <name type="scientific">Staphylococcus warneri</name>
    <dbReference type="NCBI Taxonomy" id="1292"/>
    <lineage>
        <taxon>Bacteria</taxon>
        <taxon>Bacillati</taxon>
        <taxon>Bacillota</taxon>
        <taxon>Bacilli</taxon>
        <taxon>Bacillales</taxon>
        <taxon>Staphylococcaceae</taxon>
        <taxon>Staphylococcus</taxon>
    </lineage>
</organism>
<feature type="chain" id="PRO_0000350446" description="Ribosomal RNA large subunit methyltransferase Cfr">
    <location>
        <begin position="1"/>
        <end position="349"/>
    </location>
</feature>
<feature type="domain" description="Radical SAM core" evidence="2">
    <location>
        <begin position="98"/>
        <end position="333"/>
    </location>
</feature>
<feature type="active site" description="Proton acceptor" evidence="1">
    <location>
        <position position="91"/>
    </location>
</feature>
<feature type="active site" description="S-methylcysteine intermediate" evidence="1">
    <location>
        <position position="338"/>
    </location>
</feature>
<feature type="binding site" evidence="1">
    <location>
        <position position="112"/>
    </location>
    <ligand>
        <name>[4Fe-4S] cluster</name>
        <dbReference type="ChEBI" id="CHEBI:49883"/>
        <note>4Fe-4S-S-AdoMet</note>
    </ligand>
</feature>
<feature type="binding site" evidence="1">
    <location>
        <position position="116"/>
    </location>
    <ligand>
        <name>[4Fe-4S] cluster</name>
        <dbReference type="ChEBI" id="CHEBI:49883"/>
        <note>4Fe-4S-S-AdoMet</note>
    </ligand>
</feature>
<feature type="binding site" evidence="1">
    <location>
        <position position="119"/>
    </location>
    <ligand>
        <name>[4Fe-4S] cluster</name>
        <dbReference type="ChEBI" id="CHEBI:49883"/>
        <note>4Fe-4S-S-AdoMet</note>
    </ligand>
</feature>
<feature type="binding site" evidence="1">
    <location>
        <begin position="158"/>
        <end position="159"/>
    </location>
    <ligand>
        <name>S-adenosyl-L-methionine</name>
        <dbReference type="ChEBI" id="CHEBI:59789"/>
    </ligand>
</feature>
<feature type="binding site" evidence="1">
    <location>
        <position position="189"/>
    </location>
    <ligand>
        <name>S-adenosyl-L-methionine</name>
        <dbReference type="ChEBI" id="CHEBI:59789"/>
    </ligand>
</feature>
<feature type="binding site" evidence="1">
    <location>
        <begin position="212"/>
        <end position="214"/>
    </location>
    <ligand>
        <name>S-adenosyl-L-methionine</name>
        <dbReference type="ChEBI" id="CHEBI:59789"/>
    </ligand>
</feature>
<feature type="binding site" evidence="1">
    <location>
        <position position="293"/>
    </location>
    <ligand>
        <name>S-adenosyl-L-methionine</name>
        <dbReference type="ChEBI" id="CHEBI:59789"/>
    </ligand>
</feature>
<feature type="disulfide bond" description="(transient)" evidence="1">
    <location>
        <begin position="105"/>
        <end position="338"/>
    </location>
</feature>
<protein>
    <recommendedName>
        <fullName evidence="1">Ribosomal RNA large subunit methyltransferase Cfr</fullName>
        <ecNumber evidence="1">2.1.1.224</ecNumber>
    </recommendedName>
    <alternativeName>
        <fullName evidence="1">23S rRNA (adenine(2503)-C(8))-methyltransferase</fullName>
    </alternativeName>
    <alternativeName>
        <fullName evidence="1">23S rRNA m8A2503 methyltransferase</fullName>
    </alternativeName>
</protein>
<reference key="1">
    <citation type="journal article" date="2007" name="Antimicrob. Agents Chemother.">
        <title>IS21-558 insertion sequences are involved in the mobility of the multiresistance gene cfr.</title>
        <authorList>
            <person name="Kehrenberg C."/>
            <person name="Aarestrup F.M."/>
            <person name="Schwarz S."/>
        </authorList>
    </citation>
    <scope>NUCLEOTIDE SEQUENCE [GENOMIC DNA]</scope>
    <source>
        <strain>11562A</strain>
    </source>
</reference>
<sequence length="349" mass="39862">MNFNNKTKYGKIQEFLRSNNEPDYRIKQITNAIFKQRISRFEDMKVLPKLLREDLINNFGETVLNIKLLAEQNSEQVTKVLFEVSKNERVETVNMKYKAGWESFCISSQCGCNFGCKFCATGDIGLKKNLTVDEITDQVLYFHLLGHQIDSISFMGMGEALANRQVFDALDSFTDPNLFALSPRRLSISTIGIIPSIKKITQEYPQVNLTFSLHSPYSEERSKLMPINDRYPIDEVMNILDEHIRLTSRKVYIAYIMLPGVNDSLEHANEVVSLLKSRYKSGKLYHVNLIRYNPTISAPEMYGEANEGQVEAFYKVLKSAGIHVTIRSQFGIDIDAACGQLYGNYQNSQ</sequence>
<name>CFR_STAWA</name>
<accession>A2AXI2</accession>
<keyword id="KW-0004">4Fe-4S</keyword>
<keyword id="KW-0046">Antibiotic resistance</keyword>
<keyword id="KW-0963">Cytoplasm</keyword>
<keyword id="KW-1015">Disulfide bond</keyword>
<keyword id="KW-0408">Iron</keyword>
<keyword id="KW-0411">Iron-sulfur</keyword>
<keyword id="KW-0479">Metal-binding</keyword>
<keyword id="KW-0489">Methyltransferase</keyword>
<keyword id="KW-0614">Plasmid</keyword>
<keyword id="KW-0698">rRNA processing</keyword>
<keyword id="KW-0949">S-adenosyl-L-methionine</keyword>
<keyword id="KW-0808">Transferase</keyword>
<proteinExistence type="inferred from homology"/>
<gene>
    <name evidence="1" type="primary">cfr</name>
</gene>
<dbReference type="EC" id="2.1.1.224" evidence="1"/>
<dbReference type="EMBL" id="AM408573">
    <property type="protein sequence ID" value="CAL64019.1"/>
    <property type="molecule type" value="Genomic_DNA"/>
</dbReference>
<dbReference type="SMR" id="A2AXI2"/>
<dbReference type="CARD" id="ARO:3003441">
    <property type="molecule name" value="cfrA"/>
    <property type="mechanism identifier" value="ARO:0001001"/>
    <property type="mechanism name" value="antibiotic target alteration"/>
</dbReference>
<dbReference type="KEGG" id="ag:CAL64019"/>
<dbReference type="GO" id="GO:0005737">
    <property type="term" value="C:cytoplasm"/>
    <property type="evidence" value="ECO:0007669"/>
    <property type="project" value="UniProtKB-SubCell"/>
</dbReference>
<dbReference type="GO" id="GO:0051539">
    <property type="term" value="F:4 iron, 4 sulfur cluster binding"/>
    <property type="evidence" value="ECO:0007669"/>
    <property type="project" value="UniProtKB-UniRule"/>
</dbReference>
<dbReference type="GO" id="GO:0046872">
    <property type="term" value="F:metal ion binding"/>
    <property type="evidence" value="ECO:0007669"/>
    <property type="project" value="UniProtKB-KW"/>
</dbReference>
<dbReference type="GO" id="GO:0016433">
    <property type="term" value="F:rRNA (adenine) methyltransferase activity"/>
    <property type="evidence" value="ECO:0007669"/>
    <property type="project" value="UniProtKB-UniRule"/>
</dbReference>
<dbReference type="GO" id="GO:0019843">
    <property type="term" value="F:rRNA binding"/>
    <property type="evidence" value="ECO:0007669"/>
    <property type="project" value="UniProtKB-UniRule"/>
</dbReference>
<dbReference type="GO" id="GO:0046677">
    <property type="term" value="P:response to antibiotic"/>
    <property type="evidence" value="ECO:0007669"/>
    <property type="project" value="UniProtKB-KW"/>
</dbReference>
<dbReference type="GO" id="GO:0070475">
    <property type="term" value="P:rRNA base methylation"/>
    <property type="evidence" value="ECO:0007669"/>
    <property type="project" value="UniProtKB-UniRule"/>
</dbReference>
<dbReference type="GO" id="GO:0030488">
    <property type="term" value="P:tRNA methylation"/>
    <property type="evidence" value="ECO:0007669"/>
    <property type="project" value="TreeGrafter"/>
</dbReference>
<dbReference type="CDD" id="cd01335">
    <property type="entry name" value="Radical_SAM"/>
    <property type="match status" value="1"/>
</dbReference>
<dbReference type="Gene3D" id="1.10.150.530">
    <property type="match status" value="1"/>
</dbReference>
<dbReference type="Gene3D" id="3.20.20.70">
    <property type="entry name" value="Aldolase class I"/>
    <property type="match status" value="1"/>
</dbReference>
<dbReference type="HAMAP" id="MF_01873">
    <property type="entry name" value="23SrRNA_methyltr_Cfr"/>
    <property type="match status" value="1"/>
</dbReference>
<dbReference type="InterPro" id="IPR013785">
    <property type="entry name" value="Aldolase_TIM"/>
</dbReference>
<dbReference type="InterPro" id="IPR040072">
    <property type="entry name" value="Methyltransferase_A"/>
</dbReference>
<dbReference type="InterPro" id="IPR022881">
    <property type="entry name" value="rRNA_lsu_MeTfrase_Cfr"/>
</dbReference>
<dbReference type="InterPro" id="IPR004383">
    <property type="entry name" value="rRNA_lsu_MTrfase_RlmN/Cfr"/>
</dbReference>
<dbReference type="InterPro" id="IPR007197">
    <property type="entry name" value="rSAM"/>
</dbReference>
<dbReference type="NCBIfam" id="NF000424">
    <property type="entry name" value="CfrAB"/>
    <property type="match status" value="1"/>
</dbReference>
<dbReference type="NCBIfam" id="NF011024">
    <property type="entry name" value="PRK14453.1"/>
    <property type="match status" value="1"/>
</dbReference>
<dbReference type="NCBIfam" id="TIGR04432">
    <property type="entry name" value="rSAM_Cfr"/>
    <property type="match status" value="1"/>
</dbReference>
<dbReference type="PANTHER" id="PTHR30544">
    <property type="entry name" value="23S RRNA METHYLTRANSFERASE"/>
    <property type="match status" value="1"/>
</dbReference>
<dbReference type="PANTHER" id="PTHR30544:SF5">
    <property type="entry name" value="RADICAL SAM CORE DOMAIN-CONTAINING PROTEIN"/>
    <property type="match status" value="1"/>
</dbReference>
<dbReference type="Pfam" id="PF04055">
    <property type="entry name" value="Radical_SAM"/>
    <property type="match status" value="1"/>
</dbReference>
<dbReference type="PIRSF" id="PIRSF006004">
    <property type="entry name" value="CHP00048"/>
    <property type="match status" value="1"/>
</dbReference>
<dbReference type="SFLD" id="SFLDF00275">
    <property type="entry name" value="adenosine_C2_methyltransferase"/>
    <property type="match status" value="1"/>
</dbReference>
<dbReference type="SFLD" id="SFLDF00296">
    <property type="entry name" value="adenosine_C8_methyltransferase"/>
    <property type="match status" value="1"/>
</dbReference>
<dbReference type="SFLD" id="SFLDS00029">
    <property type="entry name" value="Radical_SAM"/>
    <property type="match status" value="2"/>
</dbReference>
<dbReference type="SUPFAM" id="SSF102114">
    <property type="entry name" value="Radical SAM enzymes"/>
    <property type="match status" value="1"/>
</dbReference>
<dbReference type="PROSITE" id="PS51918">
    <property type="entry name" value="RADICAL_SAM"/>
    <property type="match status" value="1"/>
</dbReference>
<evidence type="ECO:0000255" key="1">
    <source>
        <dbReference type="HAMAP-Rule" id="MF_01873"/>
    </source>
</evidence>
<evidence type="ECO:0000255" key="2">
    <source>
        <dbReference type="PROSITE-ProRule" id="PRU01266"/>
    </source>
</evidence>